<keyword id="KW-0963">Cytoplasm</keyword>
<keyword id="KW-0444">Lipid biosynthesis</keyword>
<keyword id="KW-0443">Lipid metabolism</keyword>
<keyword id="KW-0520">NAD</keyword>
<keyword id="KW-0521">NADP</keyword>
<keyword id="KW-0547">Nucleotide-binding</keyword>
<keyword id="KW-0560">Oxidoreductase</keyword>
<keyword id="KW-0594">Phospholipid biosynthesis</keyword>
<keyword id="KW-1208">Phospholipid metabolism</keyword>
<sequence length="332" mass="36113">MTKITVFGMGSFGTALANVLAENGHDVLMWGKNQDAVDELNTCHTNKKYLKYAKLDVNIIATSDMTKAIQFADIYLMALPTKAMREVATQINDKLTSKKTFIHVAKGIENGTFKRVSEMIEDSISPEYNAGIGVLSGPSHAEEVVVKQPTTVAASSKDKNVSKLTQDLFMNDYLRVYTNDDLIGVELGGALKNIIAVASGIVAGIGYGDNAKAALMTRGLAEISRLGEKLGADPMTFLGLGGIGDLIVTCTSTHSRNFTLGYKLGQGESMDQALSEMNMVVEGIYTTKSVYHLAKEKNVDMPITNALYRVLFENISVKECVKDLMERDKKSE</sequence>
<accession>Q2YY82</accession>
<comment type="function">
    <text evidence="1">Catalyzes the reduction of the glycolytic intermediate dihydroxyacetone phosphate (DHAP) to sn-glycerol 3-phosphate (G3P), the key precursor for phospholipid synthesis.</text>
</comment>
<comment type="catalytic activity">
    <reaction evidence="1">
        <text>sn-glycerol 3-phosphate + NAD(+) = dihydroxyacetone phosphate + NADH + H(+)</text>
        <dbReference type="Rhea" id="RHEA:11092"/>
        <dbReference type="ChEBI" id="CHEBI:15378"/>
        <dbReference type="ChEBI" id="CHEBI:57540"/>
        <dbReference type="ChEBI" id="CHEBI:57597"/>
        <dbReference type="ChEBI" id="CHEBI:57642"/>
        <dbReference type="ChEBI" id="CHEBI:57945"/>
        <dbReference type="EC" id="1.1.1.94"/>
    </reaction>
    <physiologicalReaction direction="right-to-left" evidence="1">
        <dbReference type="Rhea" id="RHEA:11094"/>
    </physiologicalReaction>
</comment>
<comment type="catalytic activity">
    <reaction evidence="1">
        <text>sn-glycerol 3-phosphate + NADP(+) = dihydroxyacetone phosphate + NADPH + H(+)</text>
        <dbReference type="Rhea" id="RHEA:11096"/>
        <dbReference type="ChEBI" id="CHEBI:15378"/>
        <dbReference type="ChEBI" id="CHEBI:57597"/>
        <dbReference type="ChEBI" id="CHEBI:57642"/>
        <dbReference type="ChEBI" id="CHEBI:57783"/>
        <dbReference type="ChEBI" id="CHEBI:58349"/>
        <dbReference type="EC" id="1.1.1.94"/>
    </reaction>
    <physiologicalReaction direction="right-to-left" evidence="1">
        <dbReference type="Rhea" id="RHEA:11098"/>
    </physiologicalReaction>
</comment>
<comment type="pathway">
    <text evidence="1">Membrane lipid metabolism; glycerophospholipid metabolism.</text>
</comment>
<comment type="subcellular location">
    <subcellularLocation>
        <location evidence="1">Cytoplasm</location>
    </subcellularLocation>
</comment>
<comment type="similarity">
    <text evidence="1">Belongs to the NAD-dependent glycerol-3-phosphate dehydrogenase family.</text>
</comment>
<gene>
    <name evidence="1" type="primary">gpsA</name>
    <name type="ordered locus">SAB1336c</name>
</gene>
<dbReference type="EC" id="1.1.1.94" evidence="1"/>
<dbReference type="EMBL" id="AJ938182">
    <property type="protein sequence ID" value="CAI81025.1"/>
    <property type="molecule type" value="Genomic_DNA"/>
</dbReference>
<dbReference type="RefSeq" id="WP_000161743.1">
    <property type="nucleotide sequence ID" value="NC_007622.1"/>
</dbReference>
<dbReference type="SMR" id="Q2YY82"/>
<dbReference type="KEGG" id="sab:SAB1336c"/>
<dbReference type="HOGENOM" id="CLU_033449_0_2_9"/>
<dbReference type="UniPathway" id="UPA00940"/>
<dbReference type="GO" id="GO:0005829">
    <property type="term" value="C:cytosol"/>
    <property type="evidence" value="ECO:0007669"/>
    <property type="project" value="TreeGrafter"/>
</dbReference>
<dbReference type="GO" id="GO:0047952">
    <property type="term" value="F:glycerol-3-phosphate dehydrogenase [NAD(P)+] activity"/>
    <property type="evidence" value="ECO:0007669"/>
    <property type="project" value="UniProtKB-UniRule"/>
</dbReference>
<dbReference type="GO" id="GO:0051287">
    <property type="term" value="F:NAD binding"/>
    <property type="evidence" value="ECO:0007669"/>
    <property type="project" value="InterPro"/>
</dbReference>
<dbReference type="GO" id="GO:0005975">
    <property type="term" value="P:carbohydrate metabolic process"/>
    <property type="evidence" value="ECO:0007669"/>
    <property type="project" value="InterPro"/>
</dbReference>
<dbReference type="GO" id="GO:0046167">
    <property type="term" value="P:glycerol-3-phosphate biosynthetic process"/>
    <property type="evidence" value="ECO:0007669"/>
    <property type="project" value="UniProtKB-UniRule"/>
</dbReference>
<dbReference type="GO" id="GO:0046168">
    <property type="term" value="P:glycerol-3-phosphate catabolic process"/>
    <property type="evidence" value="ECO:0007669"/>
    <property type="project" value="InterPro"/>
</dbReference>
<dbReference type="GO" id="GO:0006650">
    <property type="term" value="P:glycerophospholipid metabolic process"/>
    <property type="evidence" value="ECO:0007669"/>
    <property type="project" value="UniProtKB-UniRule"/>
</dbReference>
<dbReference type="GO" id="GO:0008654">
    <property type="term" value="P:phospholipid biosynthetic process"/>
    <property type="evidence" value="ECO:0007669"/>
    <property type="project" value="UniProtKB-KW"/>
</dbReference>
<dbReference type="FunFam" id="1.10.1040.10:FF:000001">
    <property type="entry name" value="Glycerol-3-phosphate dehydrogenase [NAD(P)+]"/>
    <property type="match status" value="1"/>
</dbReference>
<dbReference type="FunFam" id="3.40.50.720:FF:000019">
    <property type="entry name" value="Glycerol-3-phosphate dehydrogenase [NAD(P)+]"/>
    <property type="match status" value="1"/>
</dbReference>
<dbReference type="Gene3D" id="1.10.1040.10">
    <property type="entry name" value="N-(1-d-carboxylethyl)-l-norvaline Dehydrogenase, domain 2"/>
    <property type="match status" value="1"/>
</dbReference>
<dbReference type="Gene3D" id="3.40.50.720">
    <property type="entry name" value="NAD(P)-binding Rossmann-like Domain"/>
    <property type="match status" value="1"/>
</dbReference>
<dbReference type="HAMAP" id="MF_00394">
    <property type="entry name" value="NAD_Glyc3P_dehydrog"/>
    <property type="match status" value="1"/>
</dbReference>
<dbReference type="InterPro" id="IPR008927">
    <property type="entry name" value="6-PGluconate_DH-like_C_sf"/>
</dbReference>
<dbReference type="InterPro" id="IPR013328">
    <property type="entry name" value="6PGD_dom2"/>
</dbReference>
<dbReference type="InterPro" id="IPR006168">
    <property type="entry name" value="G3P_DH_NAD-dep"/>
</dbReference>
<dbReference type="InterPro" id="IPR006109">
    <property type="entry name" value="G3P_DH_NAD-dep_C"/>
</dbReference>
<dbReference type="InterPro" id="IPR011128">
    <property type="entry name" value="G3P_DH_NAD-dep_N"/>
</dbReference>
<dbReference type="InterPro" id="IPR036291">
    <property type="entry name" value="NAD(P)-bd_dom_sf"/>
</dbReference>
<dbReference type="NCBIfam" id="NF000940">
    <property type="entry name" value="PRK00094.1-2"/>
    <property type="match status" value="1"/>
</dbReference>
<dbReference type="NCBIfam" id="NF000941">
    <property type="entry name" value="PRK00094.1-3"/>
    <property type="match status" value="1"/>
</dbReference>
<dbReference type="NCBIfam" id="NF000942">
    <property type="entry name" value="PRK00094.1-4"/>
    <property type="match status" value="1"/>
</dbReference>
<dbReference type="PANTHER" id="PTHR11728">
    <property type="entry name" value="GLYCEROL-3-PHOSPHATE DEHYDROGENASE"/>
    <property type="match status" value="1"/>
</dbReference>
<dbReference type="PANTHER" id="PTHR11728:SF1">
    <property type="entry name" value="GLYCEROL-3-PHOSPHATE DEHYDROGENASE [NAD(+)] 2, CHLOROPLASTIC"/>
    <property type="match status" value="1"/>
</dbReference>
<dbReference type="Pfam" id="PF07479">
    <property type="entry name" value="NAD_Gly3P_dh_C"/>
    <property type="match status" value="1"/>
</dbReference>
<dbReference type="Pfam" id="PF01210">
    <property type="entry name" value="NAD_Gly3P_dh_N"/>
    <property type="match status" value="1"/>
</dbReference>
<dbReference type="PIRSF" id="PIRSF000114">
    <property type="entry name" value="Glycerol-3-P_dh"/>
    <property type="match status" value="1"/>
</dbReference>
<dbReference type="PRINTS" id="PR00077">
    <property type="entry name" value="GPDHDRGNASE"/>
</dbReference>
<dbReference type="SUPFAM" id="SSF48179">
    <property type="entry name" value="6-phosphogluconate dehydrogenase C-terminal domain-like"/>
    <property type="match status" value="1"/>
</dbReference>
<dbReference type="SUPFAM" id="SSF51735">
    <property type="entry name" value="NAD(P)-binding Rossmann-fold domains"/>
    <property type="match status" value="1"/>
</dbReference>
<dbReference type="PROSITE" id="PS00957">
    <property type="entry name" value="NAD_G3PDH"/>
    <property type="match status" value="1"/>
</dbReference>
<reference key="1">
    <citation type="journal article" date="2007" name="PLoS ONE">
        <title>Molecular correlates of host specialization in Staphylococcus aureus.</title>
        <authorList>
            <person name="Herron-Olson L."/>
            <person name="Fitzgerald J.R."/>
            <person name="Musser J.M."/>
            <person name="Kapur V."/>
        </authorList>
    </citation>
    <scope>NUCLEOTIDE SEQUENCE [LARGE SCALE GENOMIC DNA]</scope>
    <source>
        <strain>bovine RF122 / ET3-1</strain>
    </source>
</reference>
<feature type="chain" id="PRO_0000255376" description="Glycerol-3-phosphate dehydrogenase [NAD(P)+]">
    <location>
        <begin position="1"/>
        <end position="332"/>
    </location>
</feature>
<feature type="active site" description="Proton acceptor" evidence="1">
    <location>
        <position position="192"/>
    </location>
</feature>
<feature type="binding site" evidence="1">
    <location>
        <position position="11"/>
    </location>
    <ligand>
        <name>NADPH</name>
        <dbReference type="ChEBI" id="CHEBI:57783"/>
    </ligand>
</feature>
<feature type="binding site" evidence="1">
    <location>
        <position position="12"/>
    </location>
    <ligand>
        <name>NADPH</name>
        <dbReference type="ChEBI" id="CHEBI:57783"/>
    </ligand>
</feature>
<feature type="binding site" evidence="1">
    <location>
        <position position="32"/>
    </location>
    <ligand>
        <name>NADPH</name>
        <dbReference type="ChEBI" id="CHEBI:57783"/>
    </ligand>
</feature>
<feature type="binding site" evidence="1">
    <location>
        <position position="106"/>
    </location>
    <ligand>
        <name>NADPH</name>
        <dbReference type="ChEBI" id="CHEBI:57783"/>
    </ligand>
</feature>
<feature type="binding site" evidence="1">
    <location>
        <position position="106"/>
    </location>
    <ligand>
        <name>sn-glycerol 3-phosphate</name>
        <dbReference type="ChEBI" id="CHEBI:57597"/>
    </ligand>
</feature>
<feature type="binding site" evidence="1">
    <location>
        <position position="137"/>
    </location>
    <ligand>
        <name>sn-glycerol 3-phosphate</name>
        <dbReference type="ChEBI" id="CHEBI:57597"/>
    </ligand>
</feature>
<feature type="binding site" evidence="1">
    <location>
        <position position="139"/>
    </location>
    <ligand>
        <name>sn-glycerol 3-phosphate</name>
        <dbReference type="ChEBI" id="CHEBI:57597"/>
    </ligand>
</feature>
<feature type="binding site" evidence="1">
    <location>
        <position position="141"/>
    </location>
    <ligand>
        <name>NADPH</name>
        <dbReference type="ChEBI" id="CHEBI:57783"/>
    </ligand>
</feature>
<feature type="binding site" evidence="1">
    <location>
        <position position="192"/>
    </location>
    <ligand>
        <name>sn-glycerol 3-phosphate</name>
        <dbReference type="ChEBI" id="CHEBI:57597"/>
    </ligand>
</feature>
<feature type="binding site" evidence="1">
    <location>
        <position position="245"/>
    </location>
    <ligand>
        <name>sn-glycerol 3-phosphate</name>
        <dbReference type="ChEBI" id="CHEBI:57597"/>
    </ligand>
</feature>
<feature type="binding site" evidence="1">
    <location>
        <position position="255"/>
    </location>
    <ligand>
        <name>sn-glycerol 3-phosphate</name>
        <dbReference type="ChEBI" id="CHEBI:57597"/>
    </ligand>
</feature>
<feature type="binding site" evidence="1">
    <location>
        <position position="256"/>
    </location>
    <ligand>
        <name>NADPH</name>
        <dbReference type="ChEBI" id="CHEBI:57783"/>
    </ligand>
</feature>
<feature type="binding site" evidence="1">
    <location>
        <position position="256"/>
    </location>
    <ligand>
        <name>sn-glycerol 3-phosphate</name>
        <dbReference type="ChEBI" id="CHEBI:57597"/>
    </ligand>
</feature>
<feature type="binding site" evidence="1">
    <location>
        <position position="257"/>
    </location>
    <ligand>
        <name>sn-glycerol 3-phosphate</name>
        <dbReference type="ChEBI" id="CHEBI:57597"/>
    </ligand>
</feature>
<feature type="binding site" evidence="1">
    <location>
        <position position="280"/>
    </location>
    <ligand>
        <name>NADPH</name>
        <dbReference type="ChEBI" id="CHEBI:57783"/>
    </ligand>
</feature>
<feature type="binding site" evidence="1">
    <location>
        <position position="282"/>
    </location>
    <ligand>
        <name>NADPH</name>
        <dbReference type="ChEBI" id="CHEBI:57783"/>
    </ligand>
</feature>
<proteinExistence type="inferred from homology"/>
<protein>
    <recommendedName>
        <fullName evidence="1">Glycerol-3-phosphate dehydrogenase [NAD(P)+]</fullName>
        <ecNumber evidence="1">1.1.1.94</ecNumber>
    </recommendedName>
    <alternativeName>
        <fullName evidence="1">NAD(P)(+)-dependent glycerol-3-phosphate dehydrogenase</fullName>
    </alternativeName>
    <alternativeName>
        <fullName evidence="1">NAD(P)H-dependent dihydroxyacetone-phosphate reductase</fullName>
    </alternativeName>
</protein>
<evidence type="ECO:0000255" key="1">
    <source>
        <dbReference type="HAMAP-Rule" id="MF_00394"/>
    </source>
</evidence>
<organism>
    <name type="scientific">Staphylococcus aureus (strain bovine RF122 / ET3-1)</name>
    <dbReference type="NCBI Taxonomy" id="273036"/>
    <lineage>
        <taxon>Bacteria</taxon>
        <taxon>Bacillati</taxon>
        <taxon>Bacillota</taxon>
        <taxon>Bacilli</taxon>
        <taxon>Bacillales</taxon>
        <taxon>Staphylococcaceae</taxon>
        <taxon>Staphylococcus</taxon>
    </lineage>
</organism>
<name>GPDA_STAAB</name>